<dbReference type="EC" id="7.6.2.10" evidence="1"/>
<dbReference type="EMBL" id="AE017224">
    <property type="protein sequence ID" value="AAX75985.1"/>
    <property type="molecule type" value="Genomic_DNA"/>
</dbReference>
<dbReference type="RefSeq" id="WP_002967281.1">
    <property type="nucleotide sequence ID" value="NC_006933.1"/>
</dbReference>
<dbReference type="SMR" id="Q578E9"/>
<dbReference type="EnsemblBacteria" id="AAX75985">
    <property type="protein sequence ID" value="AAX75985"/>
    <property type="gene ID" value="BruAb2_0568"/>
</dbReference>
<dbReference type="KEGG" id="bmb:BruAb2_0568"/>
<dbReference type="HOGENOM" id="CLU_000604_1_1_5"/>
<dbReference type="Proteomes" id="UP000000540">
    <property type="component" value="Chromosome II"/>
</dbReference>
<dbReference type="GO" id="GO:0055052">
    <property type="term" value="C:ATP-binding cassette (ABC) transporter complex, substrate-binding subunit-containing"/>
    <property type="evidence" value="ECO:0007669"/>
    <property type="project" value="TreeGrafter"/>
</dbReference>
<dbReference type="GO" id="GO:0015430">
    <property type="term" value="F:ABC-type glycerol-3-phosphate transporter activity"/>
    <property type="evidence" value="ECO:0007669"/>
    <property type="project" value="UniProtKB-EC"/>
</dbReference>
<dbReference type="GO" id="GO:0005524">
    <property type="term" value="F:ATP binding"/>
    <property type="evidence" value="ECO:0007669"/>
    <property type="project" value="UniProtKB-KW"/>
</dbReference>
<dbReference type="GO" id="GO:0016887">
    <property type="term" value="F:ATP hydrolysis activity"/>
    <property type="evidence" value="ECO:0007669"/>
    <property type="project" value="InterPro"/>
</dbReference>
<dbReference type="GO" id="GO:0008643">
    <property type="term" value="P:carbohydrate transport"/>
    <property type="evidence" value="ECO:0007669"/>
    <property type="project" value="InterPro"/>
</dbReference>
<dbReference type="GO" id="GO:0001407">
    <property type="term" value="P:glycerophosphodiester transmembrane transport"/>
    <property type="evidence" value="ECO:0007669"/>
    <property type="project" value="TreeGrafter"/>
</dbReference>
<dbReference type="CDD" id="cd03301">
    <property type="entry name" value="ABC_MalK_N"/>
    <property type="match status" value="1"/>
</dbReference>
<dbReference type="FunFam" id="3.40.50.300:FF:000042">
    <property type="entry name" value="Maltose/maltodextrin ABC transporter, ATP-binding protein"/>
    <property type="match status" value="1"/>
</dbReference>
<dbReference type="Gene3D" id="2.40.50.100">
    <property type="match status" value="1"/>
</dbReference>
<dbReference type="Gene3D" id="2.40.50.140">
    <property type="entry name" value="Nucleic acid-binding proteins"/>
    <property type="match status" value="1"/>
</dbReference>
<dbReference type="Gene3D" id="3.40.50.300">
    <property type="entry name" value="P-loop containing nucleotide triphosphate hydrolases"/>
    <property type="match status" value="1"/>
</dbReference>
<dbReference type="InterPro" id="IPR003593">
    <property type="entry name" value="AAA+_ATPase"/>
</dbReference>
<dbReference type="InterPro" id="IPR003439">
    <property type="entry name" value="ABC_transporter-like_ATP-bd"/>
</dbReference>
<dbReference type="InterPro" id="IPR017871">
    <property type="entry name" value="ABC_transporter-like_CS"/>
</dbReference>
<dbReference type="InterPro" id="IPR015855">
    <property type="entry name" value="ABC_transpr_MalK-like"/>
</dbReference>
<dbReference type="InterPro" id="IPR047641">
    <property type="entry name" value="ABC_transpr_MalK/UgpC-like"/>
</dbReference>
<dbReference type="InterPro" id="IPR008995">
    <property type="entry name" value="Mo/tungstate-bd_C_term_dom"/>
</dbReference>
<dbReference type="InterPro" id="IPR012340">
    <property type="entry name" value="NA-bd_OB-fold"/>
</dbReference>
<dbReference type="InterPro" id="IPR027417">
    <property type="entry name" value="P-loop_NTPase"/>
</dbReference>
<dbReference type="InterPro" id="IPR013611">
    <property type="entry name" value="Transp-assoc_OB_typ2"/>
</dbReference>
<dbReference type="NCBIfam" id="NF008653">
    <property type="entry name" value="PRK11650.1"/>
    <property type="match status" value="1"/>
</dbReference>
<dbReference type="PANTHER" id="PTHR43875">
    <property type="entry name" value="MALTODEXTRIN IMPORT ATP-BINDING PROTEIN MSMX"/>
    <property type="match status" value="1"/>
</dbReference>
<dbReference type="PANTHER" id="PTHR43875:SF12">
    <property type="entry name" value="SN-GLYCEROL-3-PHOSPHATE IMPORT ATP-BINDING PROTEIN UGPC"/>
    <property type="match status" value="1"/>
</dbReference>
<dbReference type="Pfam" id="PF00005">
    <property type="entry name" value="ABC_tran"/>
    <property type="match status" value="1"/>
</dbReference>
<dbReference type="Pfam" id="PF08402">
    <property type="entry name" value="TOBE_2"/>
    <property type="match status" value="1"/>
</dbReference>
<dbReference type="SMART" id="SM00382">
    <property type="entry name" value="AAA"/>
    <property type="match status" value="1"/>
</dbReference>
<dbReference type="SUPFAM" id="SSF50331">
    <property type="entry name" value="MOP-like"/>
    <property type="match status" value="1"/>
</dbReference>
<dbReference type="SUPFAM" id="SSF52540">
    <property type="entry name" value="P-loop containing nucleoside triphosphate hydrolases"/>
    <property type="match status" value="1"/>
</dbReference>
<dbReference type="PROSITE" id="PS00211">
    <property type="entry name" value="ABC_TRANSPORTER_1"/>
    <property type="match status" value="1"/>
</dbReference>
<dbReference type="PROSITE" id="PS50893">
    <property type="entry name" value="ABC_TRANSPORTER_2"/>
    <property type="match status" value="1"/>
</dbReference>
<dbReference type="PROSITE" id="PS51315">
    <property type="entry name" value="UGPC"/>
    <property type="match status" value="1"/>
</dbReference>
<evidence type="ECO:0000255" key="1">
    <source>
        <dbReference type="HAMAP-Rule" id="MF_01727"/>
    </source>
</evidence>
<reference key="1">
    <citation type="journal article" date="2005" name="J. Bacteriol.">
        <title>Completion of the genome sequence of Brucella abortus and comparison to the highly similar genomes of Brucella melitensis and Brucella suis.</title>
        <authorList>
            <person name="Halling S.M."/>
            <person name="Peterson-Burch B.D."/>
            <person name="Bricker B.J."/>
            <person name="Zuerner R.L."/>
            <person name="Qing Z."/>
            <person name="Li L.-L."/>
            <person name="Kapur V."/>
            <person name="Alt D.P."/>
            <person name="Olsen S.C."/>
        </authorList>
    </citation>
    <scope>NUCLEOTIDE SEQUENCE [LARGE SCALE GENOMIC DNA]</scope>
    <source>
        <strain>9-941</strain>
    </source>
</reference>
<comment type="function">
    <text evidence="1">Part of the ABC transporter complex UgpBAEC involved in sn-glycerol-3-phosphate (G3P) import. Responsible for energy coupling to the transport system.</text>
</comment>
<comment type="catalytic activity">
    <reaction evidence="1">
        <text>sn-glycerol 3-phosphate(out) + ATP + H2O = sn-glycerol 3-phosphate(in) + ADP + phosphate + H(+)</text>
        <dbReference type="Rhea" id="RHEA:21668"/>
        <dbReference type="ChEBI" id="CHEBI:15377"/>
        <dbReference type="ChEBI" id="CHEBI:15378"/>
        <dbReference type="ChEBI" id="CHEBI:30616"/>
        <dbReference type="ChEBI" id="CHEBI:43474"/>
        <dbReference type="ChEBI" id="CHEBI:57597"/>
        <dbReference type="ChEBI" id="CHEBI:456216"/>
        <dbReference type="EC" id="7.6.2.10"/>
    </reaction>
</comment>
<comment type="subunit">
    <text evidence="1">The complex is composed of two ATP-binding proteins (UgpC), two transmembrane proteins (UgpA and UgpE) and a solute-binding protein (UgpB).</text>
</comment>
<comment type="subcellular location">
    <subcellularLocation>
        <location evidence="1">Cell inner membrane</location>
        <topology evidence="1">Peripheral membrane protein</topology>
    </subcellularLocation>
</comment>
<comment type="similarity">
    <text evidence="1">Belongs to the ABC transporter superfamily. sn-glycerol-3-phosphate importer (TC 3.A.1.1.3) family.</text>
</comment>
<organism>
    <name type="scientific">Brucella abortus biovar 1 (strain 9-941)</name>
    <dbReference type="NCBI Taxonomy" id="262698"/>
    <lineage>
        <taxon>Bacteria</taxon>
        <taxon>Pseudomonadati</taxon>
        <taxon>Pseudomonadota</taxon>
        <taxon>Alphaproteobacteria</taxon>
        <taxon>Hyphomicrobiales</taxon>
        <taxon>Brucellaceae</taxon>
        <taxon>Brucella/Ochrobactrum group</taxon>
        <taxon>Brucella</taxon>
    </lineage>
</organism>
<accession>Q578E9</accession>
<feature type="chain" id="PRO_0000289734" description="sn-glycerol-3-phosphate import ATP-binding protein UgpC">
    <location>
        <begin position="1"/>
        <end position="351"/>
    </location>
</feature>
<feature type="domain" description="ABC transporter" evidence="1">
    <location>
        <begin position="4"/>
        <end position="235"/>
    </location>
</feature>
<feature type="binding site" evidence="1">
    <location>
        <begin position="37"/>
        <end position="44"/>
    </location>
    <ligand>
        <name>ATP</name>
        <dbReference type="ChEBI" id="CHEBI:30616"/>
    </ligand>
</feature>
<name>UGPC_BRUAB</name>
<sequence length="351" mass="38491">MSKIVLDNVRKSYGGNIEVIKGVSLEIADGEFVVLVGPSGCGKSTLLRMIAGLESITSGTISIGERVVNNVEPAERDIAMVFQNYALYPHMTVRENLAYGLKNRKTPKEEIERRIAKAAKALEIEQFLERKPRQLSGGQRQRVAMGRAIVREPAAFLFDEPLSNLDAKLRVQMRVEIKRLQRSLGTTSVYVTHDQMEAMTMADRLVVLNAGHIEQVGTPIELYEKPASTFVATFIGSPSMNLLQSPESAAWQPGRAITLPSGGYTFGVRPEDIRILEEGDQDADGFNAQVRIEAVELVGAESYIHAALSDGKPLIFRVAGRSTHNIDEMVRVGASATDVHIFGADGRRVSD</sequence>
<gene>
    <name evidence="1" type="primary">ugpC</name>
    <name type="ordered locus">BruAb2_0568</name>
</gene>
<keyword id="KW-0067">ATP-binding</keyword>
<keyword id="KW-0997">Cell inner membrane</keyword>
<keyword id="KW-1003">Cell membrane</keyword>
<keyword id="KW-0472">Membrane</keyword>
<keyword id="KW-0547">Nucleotide-binding</keyword>
<keyword id="KW-0762">Sugar transport</keyword>
<keyword id="KW-1278">Translocase</keyword>
<keyword id="KW-0813">Transport</keyword>
<proteinExistence type="inferred from homology"/>
<protein>
    <recommendedName>
        <fullName evidence="1">sn-glycerol-3-phosphate import ATP-binding protein UgpC</fullName>
        <ecNumber evidence="1">7.6.2.10</ecNumber>
    </recommendedName>
</protein>